<name>YAFD_ECO5E</name>
<evidence type="ECO:0000255" key="1">
    <source>
        <dbReference type="HAMAP-Rule" id="MF_01119"/>
    </source>
</evidence>
<comment type="subcellular location">
    <subcellularLocation>
        <location evidence="1">Cytoplasm</location>
    </subcellularLocation>
</comment>
<comment type="similarity">
    <text evidence="1">Belongs to the UPF0294 family.</text>
</comment>
<feature type="chain" id="PRO_1000137238" description="UPF0294 protein YafD">
    <location>
        <begin position="1"/>
        <end position="266"/>
    </location>
</feature>
<dbReference type="EMBL" id="CP001164">
    <property type="protein sequence ID" value="ACI35576.1"/>
    <property type="molecule type" value="Genomic_DNA"/>
</dbReference>
<dbReference type="RefSeq" id="WP_001230983.1">
    <property type="nucleotide sequence ID" value="NC_011353.1"/>
</dbReference>
<dbReference type="SMR" id="B5Z0I3"/>
<dbReference type="KEGG" id="ecf:ECH74115_0221"/>
<dbReference type="HOGENOM" id="CLU_083563_0_0_6"/>
<dbReference type="GO" id="GO:0005737">
    <property type="term" value="C:cytoplasm"/>
    <property type="evidence" value="ECO:0007669"/>
    <property type="project" value="UniProtKB-SubCell"/>
</dbReference>
<dbReference type="GO" id="GO:0003824">
    <property type="term" value="F:catalytic activity"/>
    <property type="evidence" value="ECO:0007669"/>
    <property type="project" value="InterPro"/>
</dbReference>
<dbReference type="Gene3D" id="3.60.10.10">
    <property type="entry name" value="Endonuclease/exonuclease/phosphatase"/>
    <property type="match status" value="1"/>
</dbReference>
<dbReference type="HAMAP" id="MF_01119">
    <property type="entry name" value="UPF0294"/>
    <property type="match status" value="1"/>
</dbReference>
<dbReference type="InterPro" id="IPR036691">
    <property type="entry name" value="Endo/exonu/phosph_ase_sf"/>
</dbReference>
<dbReference type="InterPro" id="IPR005135">
    <property type="entry name" value="Endo/exonuclease/phosphatase"/>
</dbReference>
<dbReference type="InterPro" id="IPR022958">
    <property type="entry name" value="UPF0294"/>
</dbReference>
<dbReference type="NCBIfam" id="NF003839">
    <property type="entry name" value="PRK05421.1-1"/>
    <property type="match status" value="1"/>
</dbReference>
<dbReference type="NCBIfam" id="NF003840">
    <property type="entry name" value="PRK05421.1-2"/>
    <property type="match status" value="1"/>
</dbReference>
<dbReference type="NCBIfam" id="NF003841">
    <property type="entry name" value="PRK05421.1-3"/>
    <property type="match status" value="1"/>
</dbReference>
<dbReference type="NCBIfam" id="NF003842">
    <property type="entry name" value="PRK05421.1-4"/>
    <property type="match status" value="1"/>
</dbReference>
<dbReference type="Pfam" id="PF03372">
    <property type="entry name" value="Exo_endo_phos"/>
    <property type="match status" value="1"/>
</dbReference>
<dbReference type="SUPFAM" id="SSF56219">
    <property type="entry name" value="DNase I-like"/>
    <property type="match status" value="1"/>
</dbReference>
<proteinExistence type="inferred from homology"/>
<organism>
    <name type="scientific">Escherichia coli O157:H7 (strain EC4115 / EHEC)</name>
    <dbReference type="NCBI Taxonomy" id="444450"/>
    <lineage>
        <taxon>Bacteria</taxon>
        <taxon>Pseudomonadati</taxon>
        <taxon>Pseudomonadota</taxon>
        <taxon>Gammaproteobacteria</taxon>
        <taxon>Enterobacterales</taxon>
        <taxon>Enterobacteriaceae</taxon>
        <taxon>Escherichia</taxon>
    </lineage>
</organism>
<accession>B5Z0I3</accession>
<keyword id="KW-0963">Cytoplasm</keyword>
<sequence>MRKNTYAMRYVAGQPAERILPPGSFASIGQALPPGEPLSTEERIRILVWNIYKQQRAEWLSVLKNYGKDAHLVLLQEAQTTPELVQFATANYLAADQVPAFVLPQHPSGVMTLSAAHPVYCCPLREREPILRLAKSALVTVYPLPDTRLLMVVNIHAVNFSLGVDVYSKQLLPIGDQIAHHSGPVIMAGDFNAWSRRRMNALYRFAREMSLRQVRFTDDQRRRAFGRPLDFVFYRGLNVSEASVLVTRASDHNPLLVEFSPGKPDK</sequence>
<protein>
    <recommendedName>
        <fullName evidence="1">UPF0294 protein YafD</fullName>
    </recommendedName>
</protein>
<gene>
    <name evidence="1" type="primary">yafD</name>
    <name type="ordered locus">ECH74115_0221</name>
</gene>
<reference key="1">
    <citation type="journal article" date="2011" name="Proc. Natl. Acad. Sci. U.S.A.">
        <title>Genomic anatomy of Escherichia coli O157:H7 outbreaks.</title>
        <authorList>
            <person name="Eppinger M."/>
            <person name="Mammel M.K."/>
            <person name="Leclerc J.E."/>
            <person name="Ravel J."/>
            <person name="Cebula T.A."/>
        </authorList>
    </citation>
    <scope>NUCLEOTIDE SEQUENCE [LARGE SCALE GENOMIC DNA]</scope>
    <source>
        <strain>EC4115 / EHEC</strain>
    </source>
</reference>